<evidence type="ECO:0000255" key="1">
    <source>
        <dbReference type="HAMAP-Rule" id="MF_01345"/>
    </source>
</evidence>
<evidence type="ECO:0000305" key="2"/>
<reference key="1">
    <citation type="journal article" date="1998" name="J. Biol. Chem.">
        <title>Purification, cloning, and preliminary characterization of a Spiroplasma citri ribosomal protein with DNA binding capacity.</title>
        <authorList>
            <person name="Le Dantec L."/>
            <person name="Castroviejo M."/>
            <person name="Bove J.M."/>
            <person name="Saillard C."/>
        </authorList>
    </citation>
    <scope>NUCLEOTIDE SEQUENCE [GENOMIC DNA]</scope>
    <source>
        <strain>ATCC 27556 / NCPPB 2647 / R8A2</strain>
    </source>
</reference>
<keyword id="KW-0687">Ribonucleoprotein</keyword>
<keyword id="KW-0689">Ribosomal protein</keyword>
<keyword id="KW-0694">RNA-binding</keyword>
<keyword id="KW-0699">rRNA-binding</keyword>
<feature type="chain" id="PRO_0000128477" description="Small ribosomal subunit protein uS17">
    <location>
        <begin position="1"/>
        <end position="85"/>
    </location>
</feature>
<sequence length="85" mass="9991">MERNSRKVLQGRVISDNLKKTITVLVETYKNHPLYKKRVKYSKKYLAHDEQNQAHIGDKVSIMETRPLSKTKHFRLIEVIEKAIG</sequence>
<name>RS17_SPICI</name>
<comment type="function">
    <text evidence="1">One of the primary rRNA binding proteins, it binds specifically to the 5'-end of 16S ribosomal RNA.</text>
</comment>
<comment type="subunit">
    <text>Part of the 30S ribosomal subunit.</text>
</comment>
<comment type="similarity">
    <text evidence="1">Belongs to the universal ribosomal protein uS17 family.</text>
</comment>
<protein>
    <recommendedName>
        <fullName evidence="1">Small ribosomal subunit protein uS17</fullName>
    </recommendedName>
    <alternativeName>
        <fullName evidence="2">30S ribosomal protein S17</fullName>
    </alternativeName>
</protein>
<proteinExistence type="inferred from homology"/>
<dbReference type="EMBL" id="AF031160">
    <property type="protein sequence ID" value="AAC35873.1"/>
    <property type="molecule type" value="Genomic_DNA"/>
</dbReference>
<dbReference type="SMR" id="O31164"/>
<dbReference type="STRING" id="2133.SCITRI_00340"/>
<dbReference type="GO" id="GO:0022627">
    <property type="term" value="C:cytosolic small ribosomal subunit"/>
    <property type="evidence" value="ECO:0007669"/>
    <property type="project" value="TreeGrafter"/>
</dbReference>
<dbReference type="GO" id="GO:0019843">
    <property type="term" value="F:rRNA binding"/>
    <property type="evidence" value="ECO:0007669"/>
    <property type="project" value="UniProtKB-UniRule"/>
</dbReference>
<dbReference type="GO" id="GO:0003735">
    <property type="term" value="F:structural constituent of ribosome"/>
    <property type="evidence" value="ECO:0007669"/>
    <property type="project" value="InterPro"/>
</dbReference>
<dbReference type="GO" id="GO:0006412">
    <property type="term" value="P:translation"/>
    <property type="evidence" value="ECO:0007669"/>
    <property type="project" value="UniProtKB-UniRule"/>
</dbReference>
<dbReference type="CDD" id="cd00364">
    <property type="entry name" value="Ribosomal_uS17"/>
    <property type="match status" value="1"/>
</dbReference>
<dbReference type="Gene3D" id="2.40.50.140">
    <property type="entry name" value="Nucleic acid-binding proteins"/>
    <property type="match status" value="1"/>
</dbReference>
<dbReference type="HAMAP" id="MF_01345_B">
    <property type="entry name" value="Ribosomal_uS17_B"/>
    <property type="match status" value="1"/>
</dbReference>
<dbReference type="InterPro" id="IPR012340">
    <property type="entry name" value="NA-bd_OB-fold"/>
</dbReference>
<dbReference type="InterPro" id="IPR000266">
    <property type="entry name" value="Ribosomal_uS17"/>
</dbReference>
<dbReference type="InterPro" id="IPR019984">
    <property type="entry name" value="Ribosomal_uS17_bact/chlr"/>
</dbReference>
<dbReference type="InterPro" id="IPR019979">
    <property type="entry name" value="Ribosomal_uS17_CS"/>
</dbReference>
<dbReference type="NCBIfam" id="NF004123">
    <property type="entry name" value="PRK05610.1"/>
    <property type="match status" value="1"/>
</dbReference>
<dbReference type="NCBIfam" id="TIGR03635">
    <property type="entry name" value="uS17_bact"/>
    <property type="match status" value="1"/>
</dbReference>
<dbReference type="PANTHER" id="PTHR10744">
    <property type="entry name" value="40S RIBOSOMAL PROTEIN S11 FAMILY MEMBER"/>
    <property type="match status" value="1"/>
</dbReference>
<dbReference type="PANTHER" id="PTHR10744:SF1">
    <property type="entry name" value="SMALL RIBOSOMAL SUBUNIT PROTEIN US17M"/>
    <property type="match status" value="1"/>
</dbReference>
<dbReference type="Pfam" id="PF00366">
    <property type="entry name" value="Ribosomal_S17"/>
    <property type="match status" value="1"/>
</dbReference>
<dbReference type="PRINTS" id="PR00973">
    <property type="entry name" value="RIBOSOMALS17"/>
</dbReference>
<dbReference type="SUPFAM" id="SSF50249">
    <property type="entry name" value="Nucleic acid-binding proteins"/>
    <property type="match status" value="1"/>
</dbReference>
<dbReference type="PROSITE" id="PS00056">
    <property type="entry name" value="RIBOSOMAL_S17"/>
    <property type="match status" value="1"/>
</dbReference>
<accession>O31164</accession>
<gene>
    <name evidence="1" type="primary">rpsQ</name>
</gene>
<organism>
    <name type="scientific">Spiroplasma citri</name>
    <dbReference type="NCBI Taxonomy" id="2133"/>
    <lineage>
        <taxon>Bacteria</taxon>
        <taxon>Bacillati</taxon>
        <taxon>Mycoplasmatota</taxon>
        <taxon>Mollicutes</taxon>
        <taxon>Entomoplasmatales</taxon>
        <taxon>Spiroplasmataceae</taxon>
        <taxon>Spiroplasma</taxon>
    </lineage>
</organism>